<accession>Q6ZMV8</accession>
<proteinExistence type="evidence at protein level"/>
<feature type="chain" id="PRO_0000328986" description="Putative zinc finger protein 730">
    <location>
        <begin position="1"/>
        <end position="503"/>
    </location>
</feature>
<feature type="domain" description="KRAB" evidence="3">
    <location>
        <begin position="4"/>
        <end position="75"/>
    </location>
</feature>
<feature type="zinc finger region" description="C2H2-type 1; degenerate" evidence="2">
    <location>
        <begin position="145"/>
        <end position="167"/>
    </location>
</feature>
<feature type="zinc finger region" description="C2H2-type 2" evidence="2">
    <location>
        <begin position="173"/>
        <end position="195"/>
    </location>
</feature>
<feature type="zinc finger region" description="C2H2-type 3" evidence="2">
    <location>
        <begin position="228"/>
        <end position="250"/>
    </location>
</feature>
<feature type="zinc finger region" description="C2H2-type 4" evidence="2">
    <location>
        <begin position="256"/>
        <end position="278"/>
    </location>
</feature>
<feature type="zinc finger region" description="C2H2-type 5" evidence="2">
    <location>
        <begin position="284"/>
        <end position="306"/>
    </location>
</feature>
<feature type="zinc finger region" description="C2H2-type 6" evidence="2">
    <location>
        <begin position="312"/>
        <end position="334"/>
    </location>
</feature>
<feature type="zinc finger region" description="C2H2-type 7" evidence="2">
    <location>
        <begin position="340"/>
        <end position="362"/>
    </location>
</feature>
<feature type="zinc finger region" description="C2H2-type 8; degenerate" evidence="2">
    <location>
        <begin position="368"/>
        <end position="390"/>
    </location>
</feature>
<feature type="zinc finger region" description="C2H2-type 9" evidence="2">
    <location>
        <begin position="396"/>
        <end position="418"/>
    </location>
</feature>
<feature type="zinc finger region" description="C2H2-type 10" evidence="2">
    <location>
        <begin position="424"/>
        <end position="446"/>
    </location>
</feature>
<feature type="zinc finger region" description="C2H2-type 11" evidence="2">
    <location>
        <begin position="452"/>
        <end position="474"/>
    </location>
</feature>
<feature type="zinc finger region" description="C2H2-type 12" evidence="2">
    <location>
        <begin position="480"/>
        <end position="502"/>
    </location>
</feature>
<feature type="sequence variant" id="VAR_057449" description="In dbSNP:rs7247102.">
    <original>G</original>
    <variation>E</variation>
    <location>
        <position position="365"/>
    </location>
</feature>
<gene>
    <name type="primary">ZNF730</name>
</gene>
<protein>
    <recommendedName>
        <fullName>Putative zinc finger protein 730</fullName>
    </recommendedName>
</protein>
<reference key="1">
    <citation type="journal article" date="2004" name="Nat. Genet.">
        <title>Complete sequencing and characterization of 21,243 full-length human cDNAs.</title>
        <authorList>
            <person name="Ota T."/>
            <person name="Suzuki Y."/>
            <person name="Nishikawa T."/>
            <person name="Otsuki T."/>
            <person name="Sugiyama T."/>
            <person name="Irie R."/>
            <person name="Wakamatsu A."/>
            <person name="Hayashi K."/>
            <person name="Sato H."/>
            <person name="Nagai K."/>
            <person name="Kimura K."/>
            <person name="Makita H."/>
            <person name="Sekine M."/>
            <person name="Obayashi M."/>
            <person name="Nishi T."/>
            <person name="Shibahara T."/>
            <person name="Tanaka T."/>
            <person name="Ishii S."/>
            <person name="Yamamoto J."/>
            <person name="Saito K."/>
            <person name="Kawai Y."/>
            <person name="Isono Y."/>
            <person name="Nakamura Y."/>
            <person name="Nagahari K."/>
            <person name="Murakami K."/>
            <person name="Yasuda T."/>
            <person name="Iwayanagi T."/>
            <person name="Wagatsuma M."/>
            <person name="Shiratori A."/>
            <person name="Sudo H."/>
            <person name="Hosoiri T."/>
            <person name="Kaku Y."/>
            <person name="Kodaira H."/>
            <person name="Kondo H."/>
            <person name="Sugawara M."/>
            <person name="Takahashi M."/>
            <person name="Kanda K."/>
            <person name="Yokoi T."/>
            <person name="Furuya T."/>
            <person name="Kikkawa E."/>
            <person name="Omura Y."/>
            <person name="Abe K."/>
            <person name="Kamihara K."/>
            <person name="Katsuta N."/>
            <person name="Sato K."/>
            <person name="Tanikawa M."/>
            <person name="Yamazaki M."/>
            <person name="Ninomiya K."/>
            <person name="Ishibashi T."/>
            <person name="Yamashita H."/>
            <person name="Murakawa K."/>
            <person name="Fujimori K."/>
            <person name="Tanai H."/>
            <person name="Kimata M."/>
            <person name="Watanabe M."/>
            <person name="Hiraoka S."/>
            <person name="Chiba Y."/>
            <person name="Ishida S."/>
            <person name="Ono Y."/>
            <person name="Takiguchi S."/>
            <person name="Watanabe S."/>
            <person name="Yosida M."/>
            <person name="Hotuta T."/>
            <person name="Kusano J."/>
            <person name="Kanehori K."/>
            <person name="Takahashi-Fujii A."/>
            <person name="Hara H."/>
            <person name="Tanase T.-O."/>
            <person name="Nomura Y."/>
            <person name="Togiya S."/>
            <person name="Komai F."/>
            <person name="Hara R."/>
            <person name="Takeuchi K."/>
            <person name="Arita M."/>
            <person name="Imose N."/>
            <person name="Musashino K."/>
            <person name="Yuuki H."/>
            <person name="Oshima A."/>
            <person name="Sasaki N."/>
            <person name="Aotsuka S."/>
            <person name="Yoshikawa Y."/>
            <person name="Matsunawa H."/>
            <person name="Ichihara T."/>
            <person name="Shiohata N."/>
            <person name="Sano S."/>
            <person name="Moriya S."/>
            <person name="Momiyama H."/>
            <person name="Satoh N."/>
            <person name="Takami S."/>
            <person name="Terashima Y."/>
            <person name="Suzuki O."/>
            <person name="Nakagawa S."/>
            <person name="Senoh A."/>
            <person name="Mizoguchi H."/>
            <person name="Goto Y."/>
            <person name="Shimizu F."/>
            <person name="Wakebe H."/>
            <person name="Hishigaki H."/>
            <person name="Watanabe T."/>
            <person name="Sugiyama A."/>
            <person name="Takemoto M."/>
            <person name="Kawakami B."/>
            <person name="Yamazaki M."/>
            <person name="Watanabe K."/>
            <person name="Kumagai A."/>
            <person name="Itakura S."/>
            <person name="Fukuzumi Y."/>
            <person name="Fujimori Y."/>
            <person name="Komiyama M."/>
            <person name="Tashiro H."/>
            <person name="Tanigami A."/>
            <person name="Fujiwara T."/>
            <person name="Ono T."/>
            <person name="Yamada K."/>
            <person name="Fujii Y."/>
            <person name="Ozaki K."/>
            <person name="Hirao M."/>
            <person name="Ohmori Y."/>
            <person name="Kawabata A."/>
            <person name="Hikiji T."/>
            <person name="Kobatake N."/>
            <person name="Inagaki H."/>
            <person name="Ikema Y."/>
            <person name="Okamoto S."/>
            <person name="Okitani R."/>
            <person name="Kawakami T."/>
            <person name="Noguchi S."/>
            <person name="Itoh T."/>
            <person name="Shigeta K."/>
            <person name="Senba T."/>
            <person name="Matsumura K."/>
            <person name="Nakajima Y."/>
            <person name="Mizuno T."/>
            <person name="Morinaga M."/>
            <person name="Sasaki M."/>
            <person name="Togashi T."/>
            <person name="Oyama M."/>
            <person name="Hata H."/>
            <person name="Watanabe M."/>
            <person name="Komatsu T."/>
            <person name="Mizushima-Sugano J."/>
            <person name="Satoh T."/>
            <person name="Shirai Y."/>
            <person name="Takahashi Y."/>
            <person name="Nakagawa K."/>
            <person name="Okumura K."/>
            <person name="Nagase T."/>
            <person name="Nomura N."/>
            <person name="Kikuchi H."/>
            <person name="Masuho Y."/>
            <person name="Yamashita R."/>
            <person name="Nakai K."/>
            <person name="Yada T."/>
            <person name="Nakamura Y."/>
            <person name="Ohara O."/>
            <person name="Isogai T."/>
            <person name="Sugano S."/>
        </authorList>
    </citation>
    <scope>NUCLEOTIDE SEQUENCE [LARGE SCALE MRNA]</scope>
    <source>
        <tissue>Testis</tissue>
    </source>
</reference>
<organism>
    <name type="scientific">Homo sapiens</name>
    <name type="common">Human</name>
    <dbReference type="NCBI Taxonomy" id="9606"/>
    <lineage>
        <taxon>Eukaryota</taxon>
        <taxon>Metazoa</taxon>
        <taxon>Chordata</taxon>
        <taxon>Craniata</taxon>
        <taxon>Vertebrata</taxon>
        <taxon>Euteleostomi</taxon>
        <taxon>Mammalia</taxon>
        <taxon>Eutheria</taxon>
        <taxon>Euarchontoglires</taxon>
        <taxon>Primates</taxon>
        <taxon>Haplorrhini</taxon>
        <taxon>Catarrhini</taxon>
        <taxon>Hominidae</taxon>
        <taxon>Homo</taxon>
    </lineage>
</organism>
<evidence type="ECO:0000250" key="1"/>
<evidence type="ECO:0000255" key="2">
    <source>
        <dbReference type="PROSITE-ProRule" id="PRU00042"/>
    </source>
</evidence>
<evidence type="ECO:0000255" key="3">
    <source>
        <dbReference type="PROSITE-ProRule" id="PRU00119"/>
    </source>
</evidence>
<evidence type="ECO:0000305" key="4"/>
<keyword id="KW-0238">DNA-binding</keyword>
<keyword id="KW-0479">Metal-binding</keyword>
<keyword id="KW-0539">Nucleus</keyword>
<keyword id="KW-1267">Proteomics identification</keyword>
<keyword id="KW-1185">Reference proteome</keyword>
<keyword id="KW-0677">Repeat</keyword>
<keyword id="KW-0804">Transcription</keyword>
<keyword id="KW-0805">Transcription regulation</keyword>
<keyword id="KW-0862">Zinc</keyword>
<keyword id="KW-0863">Zinc-finger</keyword>
<sequence>MGALTFRDVAIEFSLEEWQCLDTEQQNLYRNVMLDNYRNLVFLGIAVSKPDLITCLEQEKEPWNLKTHDMVAKPPVICSHIAQDLWPEQGIKDYFQEVILRQYKKCRHENLLLRKGCKNVDEFKMHKKGYNRHNQCLTTSHSKIFQCDKYVKVFHKFSNSNRHKIRHTSKKPFKCKECGKLFCILSHLAQHKKIHTGEKSYKCEEYGKAFNESSNCTTHKRITEKKPYKCKECGKAFNWFSHFTTHKRIHTGEKPYQCEKCGKFFNQSTNLTTHKRIHTGEKPYKCEECGKAFNQSSNLTEHKKIHTKEQPYKCEKCGKAFKWSSTLTKHKRIHNGEKPYKCEECGKAFNRSSTLNRHKITHTGGKPYKYKECGKAFNQSSTLTIHKIIHTVEKFYKCEECGKAFSRISHLTTHKRIHTGEKPYKCEECGRAFNQSSTLTTHKRIHTGEKPYECEECGKAFNRSSTLTTHKIIHSGEKIYKCKECGKAFRRFSHLTRHKTIHT</sequence>
<dbReference type="EMBL" id="AK131472">
    <property type="protein sequence ID" value="BAD18617.1"/>
    <property type="molecule type" value="mRNA"/>
</dbReference>
<dbReference type="CCDS" id="CCDS59371.1"/>
<dbReference type="RefSeq" id="NP_001264332.1">
    <property type="nucleotide sequence ID" value="NM_001277403.2"/>
</dbReference>
<dbReference type="SMR" id="Q6ZMV8"/>
<dbReference type="BioGRID" id="934143">
    <property type="interactions" value="1"/>
</dbReference>
<dbReference type="IntAct" id="Q6ZMV8">
    <property type="interactions" value="1"/>
</dbReference>
<dbReference type="MINT" id="Q6ZMV8"/>
<dbReference type="STRING" id="9606.ENSP00000472959"/>
<dbReference type="iPTMnet" id="Q6ZMV8"/>
<dbReference type="PhosphoSitePlus" id="Q6ZMV8"/>
<dbReference type="BioMuta" id="ZNF730"/>
<dbReference type="DMDM" id="74758685"/>
<dbReference type="jPOST" id="Q6ZMV8"/>
<dbReference type="MassIVE" id="Q6ZMV8"/>
<dbReference type="PaxDb" id="9606-ENSP00000472959"/>
<dbReference type="PeptideAtlas" id="Q6ZMV8"/>
<dbReference type="ProteomicsDB" id="67923"/>
<dbReference type="Antibodypedia" id="82300">
    <property type="antibodies" value="1 antibodies from 1 providers"/>
</dbReference>
<dbReference type="DNASU" id="100129543"/>
<dbReference type="Ensembl" id="ENST00000597761.7">
    <property type="protein sequence ID" value="ENSP00000472959.1"/>
    <property type="gene ID" value="ENSG00000183850.14"/>
</dbReference>
<dbReference type="GeneID" id="100129543"/>
<dbReference type="KEGG" id="hsa:100129543"/>
<dbReference type="MANE-Select" id="ENST00000597761.7">
    <property type="protein sequence ID" value="ENSP00000472959.1"/>
    <property type="RefSeq nucleotide sequence ID" value="NM_001277403.2"/>
    <property type="RefSeq protein sequence ID" value="NP_001264332.1"/>
</dbReference>
<dbReference type="UCSC" id="uc031rkc.2">
    <property type="organism name" value="human"/>
</dbReference>
<dbReference type="AGR" id="HGNC:32470"/>
<dbReference type="CTD" id="100129543"/>
<dbReference type="DisGeNET" id="100129543"/>
<dbReference type="GeneCards" id="ZNF730"/>
<dbReference type="HGNC" id="HGNC:32470">
    <property type="gene designation" value="ZNF730"/>
</dbReference>
<dbReference type="HPA" id="ENSG00000183850">
    <property type="expression patterns" value="Tissue enhanced (testis)"/>
</dbReference>
<dbReference type="neXtProt" id="NX_Q6ZMV8"/>
<dbReference type="OpenTargets" id="ENSG00000183850"/>
<dbReference type="VEuPathDB" id="HostDB:ENSG00000183850"/>
<dbReference type="eggNOG" id="KOG1721">
    <property type="taxonomic scope" value="Eukaryota"/>
</dbReference>
<dbReference type="GeneTree" id="ENSGT01130000278311"/>
<dbReference type="HOGENOM" id="CLU_002678_44_0_1"/>
<dbReference type="InParanoid" id="Q6ZMV8"/>
<dbReference type="OMA" id="VICSHIA"/>
<dbReference type="OrthoDB" id="1095242at2759"/>
<dbReference type="PAN-GO" id="Q6ZMV8">
    <property type="GO annotations" value="3 GO annotations based on evolutionary models"/>
</dbReference>
<dbReference type="PhylomeDB" id="Q6ZMV8"/>
<dbReference type="TreeFam" id="TF342117"/>
<dbReference type="PathwayCommons" id="Q6ZMV8"/>
<dbReference type="Reactome" id="R-HSA-212436">
    <property type="pathway name" value="Generic Transcription Pathway"/>
</dbReference>
<dbReference type="SignaLink" id="Q6ZMV8"/>
<dbReference type="BioGRID-ORCS" id="100129543">
    <property type="hits" value="90 hits in 1050 CRISPR screens"/>
</dbReference>
<dbReference type="ChiTaRS" id="ZNF730">
    <property type="organism name" value="human"/>
</dbReference>
<dbReference type="GenomeRNAi" id="100129543"/>
<dbReference type="Pharos" id="Q6ZMV8">
    <property type="development level" value="Tdark"/>
</dbReference>
<dbReference type="PRO" id="PR:Q6ZMV8"/>
<dbReference type="Proteomes" id="UP000005640">
    <property type="component" value="Chromosome 19"/>
</dbReference>
<dbReference type="RNAct" id="Q6ZMV8">
    <property type="molecule type" value="protein"/>
</dbReference>
<dbReference type="Bgee" id="ENSG00000183850">
    <property type="expression patterns" value="Expressed in male germ line stem cell (sensu Vertebrata) in testis and 94 other cell types or tissues"/>
</dbReference>
<dbReference type="ExpressionAtlas" id="Q6ZMV8">
    <property type="expression patterns" value="baseline and differential"/>
</dbReference>
<dbReference type="GO" id="GO:0005634">
    <property type="term" value="C:nucleus"/>
    <property type="evidence" value="ECO:0007669"/>
    <property type="project" value="UniProtKB-SubCell"/>
</dbReference>
<dbReference type="GO" id="GO:0000981">
    <property type="term" value="F:DNA-binding transcription factor activity, RNA polymerase II-specific"/>
    <property type="evidence" value="ECO:0000318"/>
    <property type="project" value="GO_Central"/>
</dbReference>
<dbReference type="GO" id="GO:0000978">
    <property type="term" value="F:RNA polymerase II cis-regulatory region sequence-specific DNA binding"/>
    <property type="evidence" value="ECO:0000318"/>
    <property type="project" value="GO_Central"/>
</dbReference>
<dbReference type="GO" id="GO:0008270">
    <property type="term" value="F:zinc ion binding"/>
    <property type="evidence" value="ECO:0007669"/>
    <property type="project" value="UniProtKB-KW"/>
</dbReference>
<dbReference type="GO" id="GO:0006355">
    <property type="term" value="P:regulation of DNA-templated transcription"/>
    <property type="evidence" value="ECO:0000318"/>
    <property type="project" value="GO_Central"/>
</dbReference>
<dbReference type="CDD" id="cd07765">
    <property type="entry name" value="KRAB_A-box"/>
    <property type="match status" value="1"/>
</dbReference>
<dbReference type="FunFam" id="3.30.160.60:FF:001956">
    <property type="entry name" value="ZFP37 zinc finger protein"/>
    <property type="match status" value="1"/>
</dbReference>
<dbReference type="FunFam" id="3.30.160.60:FF:000034">
    <property type="entry name" value="zinc finger protein 25"/>
    <property type="match status" value="2"/>
</dbReference>
<dbReference type="FunFam" id="3.30.160.60:FF:000016">
    <property type="entry name" value="zinc finger protein 37 homolog"/>
    <property type="match status" value="1"/>
</dbReference>
<dbReference type="FunFam" id="3.30.160.60:FF:000120">
    <property type="entry name" value="Zinc finger protein 430"/>
    <property type="match status" value="3"/>
</dbReference>
<dbReference type="FunFam" id="3.30.160.60:FF:000895">
    <property type="entry name" value="Zinc finger protein 597"/>
    <property type="match status" value="1"/>
</dbReference>
<dbReference type="FunFam" id="3.30.160.60:FF:000362">
    <property type="entry name" value="Zinc finger protein 606"/>
    <property type="match status" value="2"/>
</dbReference>
<dbReference type="FunFam" id="3.30.160.60:FF:000307">
    <property type="entry name" value="Zinc finger protein ZFP69 isoform 1"/>
    <property type="match status" value="2"/>
</dbReference>
<dbReference type="Gene3D" id="6.10.140.140">
    <property type="match status" value="1"/>
</dbReference>
<dbReference type="Gene3D" id="3.30.160.60">
    <property type="entry name" value="Classic Zinc Finger"/>
    <property type="match status" value="12"/>
</dbReference>
<dbReference type="InterPro" id="IPR001909">
    <property type="entry name" value="KRAB"/>
</dbReference>
<dbReference type="InterPro" id="IPR036051">
    <property type="entry name" value="KRAB_dom_sf"/>
</dbReference>
<dbReference type="InterPro" id="IPR050758">
    <property type="entry name" value="Znf_C2H2-type"/>
</dbReference>
<dbReference type="InterPro" id="IPR036236">
    <property type="entry name" value="Znf_C2H2_sf"/>
</dbReference>
<dbReference type="InterPro" id="IPR013087">
    <property type="entry name" value="Znf_C2H2_type"/>
</dbReference>
<dbReference type="PANTHER" id="PTHR23234:SF8">
    <property type="entry name" value="C2H2-TYPE DOMAIN-CONTAINING PROTEIN"/>
    <property type="match status" value="1"/>
</dbReference>
<dbReference type="PANTHER" id="PTHR23234">
    <property type="entry name" value="ZNF44 PROTEIN"/>
    <property type="match status" value="1"/>
</dbReference>
<dbReference type="Pfam" id="PF01352">
    <property type="entry name" value="KRAB"/>
    <property type="match status" value="1"/>
</dbReference>
<dbReference type="Pfam" id="PF00096">
    <property type="entry name" value="zf-C2H2"/>
    <property type="match status" value="8"/>
</dbReference>
<dbReference type="Pfam" id="PF13465">
    <property type="entry name" value="zf-H2C2_2"/>
    <property type="match status" value="1"/>
</dbReference>
<dbReference type="SMART" id="SM00349">
    <property type="entry name" value="KRAB"/>
    <property type="match status" value="1"/>
</dbReference>
<dbReference type="SMART" id="SM00355">
    <property type="entry name" value="ZnF_C2H2"/>
    <property type="match status" value="11"/>
</dbReference>
<dbReference type="SUPFAM" id="SSF57667">
    <property type="entry name" value="beta-beta-alpha zinc fingers"/>
    <property type="match status" value="7"/>
</dbReference>
<dbReference type="SUPFAM" id="SSF109640">
    <property type="entry name" value="KRAB domain (Kruppel-associated box)"/>
    <property type="match status" value="1"/>
</dbReference>
<dbReference type="PROSITE" id="PS50805">
    <property type="entry name" value="KRAB"/>
    <property type="match status" value="1"/>
</dbReference>
<dbReference type="PROSITE" id="PS00028">
    <property type="entry name" value="ZINC_FINGER_C2H2_1"/>
    <property type="match status" value="10"/>
</dbReference>
<dbReference type="PROSITE" id="PS50157">
    <property type="entry name" value="ZINC_FINGER_C2H2_2"/>
    <property type="match status" value="12"/>
</dbReference>
<comment type="function">
    <text evidence="1">May be involved in transcriptional regulation.</text>
</comment>
<comment type="subcellular location">
    <subcellularLocation>
        <location evidence="1">Nucleus</location>
    </subcellularLocation>
</comment>
<comment type="similarity">
    <text evidence="4">Belongs to the krueppel C2H2-type zinc-finger protein family.</text>
</comment>
<name>ZN730_HUMAN</name>